<protein>
    <recommendedName>
        <fullName evidence="1">Hemagglutinin-esterase-fusion glycoprotein</fullName>
        <shortName evidence="1">HEF</shortName>
        <ecNumber evidence="1">3.1.1.53</ecNumber>
    </recommendedName>
    <component>
        <recommendedName>
            <fullName evidence="1">Hemagglutinin-esterase-fusion glycoprotein chain 1</fullName>
            <shortName evidence="1">HEF1</shortName>
        </recommendedName>
    </component>
    <component>
        <recommendedName>
            <fullName evidence="1">Hemagglutinin-esterase-fusion glycoprotein chain 2</fullName>
            <shortName evidence="1">HEF2</shortName>
        </recommendedName>
    </component>
</protein>
<organism>
    <name type="scientific">Influenza C virus (strain C/Ann Arbor/1/1950)</name>
    <dbReference type="NCBI Taxonomy" id="11553"/>
    <lineage>
        <taxon>Viruses</taxon>
        <taxon>Riboviria</taxon>
        <taxon>Orthornavirae</taxon>
        <taxon>Negarnaviricota</taxon>
        <taxon>Polyploviricotina</taxon>
        <taxon>Insthoviricetes</taxon>
        <taxon>Articulavirales</taxon>
        <taxon>Orthomyxoviridae</taxon>
        <taxon>Gammainfluenzavirus</taxon>
        <taxon>Gammainfluenzavirus influenzae</taxon>
        <taxon>Influenza C virus</taxon>
    </lineage>
</organism>
<organismHost>
    <name type="scientific">Homo sapiens</name>
    <name type="common">Human</name>
    <dbReference type="NCBI Taxonomy" id="9606"/>
</organismHost>
<organismHost>
    <name type="scientific">Sus scrofa</name>
    <name type="common">Pig</name>
    <dbReference type="NCBI Taxonomy" id="9823"/>
</organismHost>
<evidence type="ECO:0000255" key="1">
    <source>
        <dbReference type="HAMAP-Rule" id="MF_04072"/>
    </source>
</evidence>
<evidence type="ECO:0000305" key="2"/>
<gene>
    <name evidence="1" type="primary">HE</name>
</gene>
<comment type="function">
    <text evidence="1">Binds to the N-acetyl-9-O-acetylneuraminic acid residues on the cell surface, bringing about the attachment of the virus particle to the cell. Plays a major role in the determination of host range restriction and virulence. Class I viral fusion protein. Responsible for penetration of the virus into the cell cytoplasm by mediating the fusion of the membrane of the endocytosed virus particle with the endosomal membrane. Low pH in endosomes induce an irreversible conformational change in HEF2, releasing the fusion hydrophobic peptide. Several trimers are required to form a competent fusion pore. Displays a receptor-destroying activity which is a neuraminidate-O-acetyl esterase. This activity cleaves off any receptor on the cell surface, which would otherwise prevent virions release. These cleavages prevent self-aggregation and ensure the efficient spread of the progeny virus from cell to cell.</text>
</comment>
<comment type="catalytic activity">
    <reaction evidence="1">
        <text>N-acetyl-9-O-acetylneuraminate + H2O = N-acetylneuraminate + acetate + H(+)</text>
        <dbReference type="Rhea" id="RHEA:22600"/>
        <dbReference type="ChEBI" id="CHEBI:15377"/>
        <dbReference type="ChEBI" id="CHEBI:15378"/>
        <dbReference type="ChEBI" id="CHEBI:28999"/>
        <dbReference type="ChEBI" id="CHEBI:30089"/>
        <dbReference type="ChEBI" id="CHEBI:35418"/>
        <dbReference type="EC" id="3.1.1.53"/>
    </reaction>
</comment>
<comment type="catalytic activity">
    <reaction evidence="1">
        <text>N-acetyl-4-O-acetylneuraminate + H2O = N-acetylneuraminate + acetate + H(+)</text>
        <dbReference type="Rhea" id="RHEA:25564"/>
        <dbReference type="ChEBI" id="CHEBI:15377"/>
        <dbReference type="ChEBI" id="CHEBI:15378"/>
        <dbReference type="ChEBI" id="CHEBI:29006"/>
        <dbReference type="ChEBI" id="CHEBI:30089"/>
        <dbReference type="ChEBI" id="CHEBI:35418"/>
        <dbReference type="EC" id="3.1.1.53"/>
    </reaction>
</comment>
<comment type="subunit">
    <text evidence="1">Homotrimer of disulfide-linked HEF1-HEF2.</text>
</comment>
<comment type="subcellular location">
    <subcellularLocation>
        <location evidence="1">Virion membrane</location>
        <topology evidence="1">Single-pass type I membrane protein</topology>
    </subcellularLocation>
    <subcellularLocation>
        <location evidence="1">Host cell membrane</location>
        <topology evidence="1">Single-pass type I membrane protein</topology>
    </subcellularLocation>
</comment>
<comment type="PTM">
    <text evidence="1">In natural infection, inactive HEF is matured into HEF1 and HEF2 outside the cell by one or more trypsin-like, arginine-specific endoprotease.</text>
</comment>
<comment type="similarity">
    <text evidence="1">Belongs to the influenza viruses hemagglutinin family.</text>
</comment>
<sequence length="655" mass="71956">MFFSLLLMLGLTEAEKIKICLQKQVNSSFSLHNGFGGNLYATEEKRMFELVKPKAGASVLNQSTWIGFGDSRTDKSNSAFPRSADVSAKTADKFRSLSGGSLMLSMFGPPGKVDYLYQGCGKHKVFYEGVNWSPHAAINCYRKNWTDIKLNFQKNIYELASQSHCMSLVNALDKTIPLQATAGVAKNCNNSFLKNPALYTQEVNPSVEKCGKENLAFFTLPTQFGTYECKLHLVASCYFIYDSKEVYNKRGCDNYFQVIYDSSGKVVGGLDNRVSPYTGNSGDTPTMQCDMLQLKPGRYSVRSSPRFLLMPERSYCFDMKEKGPVTAVQSIWGKGRESDHAVDQACLSTPGCMLIQKQKPYIGEADDHHGDQEMRELLSGLDYEARCISQSGWVNETSPFTEEYLLPPKFGRCPLAAKEESIPKIPDGLLIPTSGTDTTVTKPKSRIFGIDDLIIGLLFVAIVEAGIGGYLLGSRKVSGGGVTKESAEKGFEKIGNDIQILRSSTNIAIEKLNDRISHDEQAIRDLTLEIENARSEALLGELGIIRALLVGNISIGLQESLWELASEITNRAGDLAVEVSPGCWVIDNNICDQSCQNFIFKFNETAPVPTIPPLDTKIDLQSDPFYWGSSLGLAITAAISLAALVISGIAICRTK</sequence>
<proteinExistence type="inferred from homology"/>
<name>HEMA_INCAA</name>
<accession>P68762</accession>
<accession>P07969</accession>
<accession>Q6I7C1</accession>
<reference key="1">
    <citation type="journal article" date="2004" name="J. Gen. Virol.">
        <title>Identification of an amino acid residue on influenza C virus M1 protein responsible for formation of the cord-like structures of the virus.</title>
        <authorList>
            <person name="Muraki Y."/>
            <person name="Washioka H."/>
            <person name="Sugawara K."/>
            <person name="Matsuzaki Y."/>
            <person name="Takashita E."/>
            <person name="Hongo S."/>
        </authorList>
    </citation>
    <scope>NUCLEOTIDE SEQUENCE [GENOMIC RNA]</scope>
</reference>
<reference key="2">
    <citation type="journal article" date="1985" name="Virology">
        <title>Noncumulative sequence changes in the hemagglutinin genes of influenza C virus isolates.</title>
        <authorList>
            <person name="Buonagurio D.A."/>
            <person name="Nakada S."/>
            <person name="Desselberger U."/>
            <person name="Krystal M."/>
            <person name="Palese P."/>
        </authorList>
    </citation>
    <scope>NUCLEOTIDE SEQUENCE [GENOMIC RNA] OF 14-655</scope>
</reference>
<feature type="signal peptide" evidence="1">
    <location>
        <begin position="1"/>
        <end position="14"/>
    </location>
</feature>
<feature type="chain" id="PRO_0000440551" description="Hemagglutinin-esterase-fusion glycoprotein" evidence="1">
    <location>
        <begin position="15"/>
        <end position="655"/>
    </location>
</feature>
<feature type="chain" id="PRO_0000039142" description="Hemagglutinin-esterase-fusion glycoprotein chain 1" evidence="1">
    <location>
        <begin position="15"/>
        <end position="446"/>
    </location>
</feature>
<feature type="chain" id="PRO_0000039143" description="Hemagglutinin-esterase-fusion glycoprotein chain 2" evidence="1">
    <location>
        <begin position="447"/>
        <end position="655"/>
    </location>
</feature>
<feature type="topological domain" description="Extracellular" evidence="1">
    <location>
        <begin position="15"/>
        <end position="630"/>
    </location>
</feature>
<feature type="transmembrane region" description="Helical" evidence="1">
    <location>
        <begin position="631"/>
        <end position="651"/>
    </location>
</feature>
<feature type="topological domain" description="Cytoplasmic" evidence="1">
    <location>
        <begin position="652"/>
        <end position="655"/>
    </location>
</feature>
<feature type="region of interest" description="Fusion domain-1" evidence="1">
    <location>
        <begin position="15"/>
        <end position="40"/>
    </location>
</feature>
<feature type="region of interest" description="Esterase domain-1" evidence="1">
    <location>
        <begin position="41"/>
        <end position="158"/>
    </location>
</feature>
<feature type="region of interest" description="N-acetyl-9-O-acetylneuraminic acid binding" evidence="1">
    <location>
        <begin position="158"/>
        <end position="310"/>
    </location>
</feature>
<feature type="region of interest" description="Esterase domain-2" evidence="1">
    <location>
        <begin position="310"/>
        <end position="364"/>
    </location>
</feature>
<feature type="region of interest" description="Fusion domain-2" evidence="1">
    <location>
        <begin position="365"/>
        <end position="650"/>
    </location>
</feature>
<feature type="active site" description="Nucleophile" evidence="1">
    <location>
        <position position="71"/>
    </location>
</feature>
<feature type="active site" description="Charge relay system" evidence="1">
    <location>
        <position position="366"/>
    </location>
</feature>
<feature type="active site" description="Charge relay system" evidence="1">
    <location>
        <position position="369"/>
    </location>
</feature>
<feature type="glycosylation site" description="N-linked (GlcNAc...) asparagine; by host" evidence="1">
    <location>
        <position position="26"/>
    </location>
</feature>
<feature type="glycosylation site" description="N-linked (GlcNAc...) asparagine; by host" evidence="1">
    <location>
        <position position="61"/>
    </location>
</feature>
<feature type="glycosylation site" description="N-linked (GlcNAc...) asparagine; by host" evidence="1">
    <location>
        <position position="144"/>
    </location>
</feature>
<feature type="glycosylation site" description="N-linked (GlcNAc...) asparagine; by host" evidence="1">
    <location>
        <position position="189"/>
    </location>
</feature>
<feature type="glycosylation site" description="N-linked (GlcNAc...) asparagine; by host" evidence="1">
    <location>
        <position position="395"/>
    </location>
</feature>
<feature type="glycosylation site" description="N-linked (GlcNAc...) asparagine; by host" evidence="1">
    <location>
        <position position="552"/>
    </location>
</feature>
<feature type="glycosylation site" description="N-linked (GlcNAc...) asparagine; by host" evidence="1">
    <location>
        <position position="603"/>
    </location>
</feature>
<feature type="disulfide bond" description="Interchain (between HEF1 and HEF2 chains)" evidence="1">
    <location>
        <begin position="20"/>
        <end position="583"/>
    </location>
</feature>
<feature type="disulfide bond" evidence="1">
    <location>
        <begin position="210"/>
        <end position="252"/>
    </location>
</feature>
<feature type="disulfide bond" evidence="1">
    <location>
        <begin position="229"/>
        <end position="316"/>
    </location>
</feature>
<feature type="disulfide bond" evidence="1">
    <location>
        <begin position="237"/>
        <end position="289"/>
    </location>
</feature>
<feature type="sequence conflict" description="In Ref. 2; AAA43782." evidence="2" ref="2">
    <original>VEK</original>
    <variation>EEI</variation>
    <location>
        <begin position="207"/>
        <end position="209"/>
    </location>
</feature>
<feature type="sequence conflict" description="In Ref. 2; AAA43782." evidence="2" ref="2">
    <original>N</original>
    <variation>Y</variation>
    <location>
        <position position="214"/>
    </location>
</feature>
<feature type="sequence conflict" description="In Ref. 2; AAA43782." evidence="2" ref="2">
    <original>S</original>
    <variation>Y</variation>
    <location>
        <position position="263"/>
    </location>
</feature>
<feature type="sequence conflict" description="In Ref. 2; AAA43782." evidence="2" ref="2">
    <original>P</original>
    <variation>L</variation>
    <location>
        <position position="324"/>
    </location>
</feature>
<feature type="sequence conflict" description="In Ref. 2; AAA43782." evidence="2" ref="2">
    <original>C</original>
    <variation>Y</variation>
    <location>
        <position position="346"/>
    </location>
</feature>
<feature type="sequence conflict" description="In Ref. 2; AAA43782." evidence="2" ref="2">
    <original>L</original>
    <variation>F</variation>
    <location>
        <position position="458"/>
    </location>
</feature>
<feature type="sequence conflict" description="In Ref. 2; AAA43782." evidence="2" ref="2">
    <original>V</original>
    <variation>E</variation>
    <location>
        <position position="477"/>
    </location>
</feature>
<feature type="sequence conflict" description="In Ref. 2; AAA43782." evidence="2" ref="2">
    <original>AA</original>
    <variation>TP</variation>
    <location>
        <begin position="637"/>
        <end position="638"/>
    </location>
</feature>
<keyword id="KW-1015">Disulfide bond</keyword>
<keyword id="KW-1170">Fusion of virus membrane with host endosomal membrane</keyword>
<keyword id="KW-1168">Fusion of virus membrane with host membrane</keyword>
<keyword id="KW-0325">Glycoprotein</keyword>
<keyword id="KW-0348">Hemagglutinin</keyword>
<keyword id="KW-1032">Host cell membrane</keyword>
<keyword id="KW-1043">Host membrane</keyword>
<keyword id="KW-0945">Host-virus interaction</keyword>
<keyword id="KW-0378">Hydrolase</keyword>
<keyword id="KW-0472">Membrane</keyword>
<keyword id="KW-1185">Reference proteome</keyword>
<keyword id="KW-0732">Signal</keyword>
<keyword id="KW-0812">Transmembrane</keyword>
<keyword id="KW-1133">Transmembrane helix</keyword>
<keyword id="KW-1161">Viral attachment to host cell</keyword>
<keyword id="KW-0261">Viral envelope protein</keyword>
<keyword id="KW-1162">Viral penetration into host cytoplasm</keyword>
<keyword id="KW-0946">Virion</keyword>
<keyword id="KW-1164">Virus endocytosis by host</keyword>
<keyword id="KW-1160">Virus entry into host cell</keyword>
<dbReference type="EC" id="3.1.1.53" evidence="1"/>
<dbReference type="EMBL" id="AB126194">
    <property type="protein sequence ID" value="BAD24940.1"/>
    <property type="molecule type" value="Genomic_RNA"/>
</dbReference>
<dbReference type="EMBL" id="M11638">
    <property type="protein sequence ID" value="AAA43782.1"/>
    <property type="molecule type" value="Genomic_RNA"/>
</dbReference>
<dbReference type="SMR" id="P68762"/>
<dbReference type="GlyCosmos" id="P68762">
    <property type="glycosylation" value="7 sites, No reported glycans"/>
</dbReference>
<dbReference type="DNASU" id="3077359"/>
<dbReference type="KEGG" id="vg:3077359"/>
<dbReference type="OrthoDB" id="2655at10239"/>
<dbReference type="Proteomes" id="UP000008286">
    <property type="component" value="Genome"/>
</dbReference>
<dbReference type="GO" id="GO:0020002">
    <property type="term" value="C:host cell plasma membrane"/>
    <property type="evidence" value="ECO:0007669"/>
    <property type="project" value="UniProtKB-SubCell"/>
</dbReference>
<dbReference type="GO" id="GO:0016020">
    <property type="term" value="C:membrane"/>
    <property type="evidence" value="ECO:0007669"/>
    <property type="project" value="UniProtKB-UniRule"/>
</dbReference>
<dbReference type="GO" id="GO:0019031">
    <property type="term" value="C:viral envelope"/>
    <property type="evidence" value="ECO:0007669"/>
    <property type="project" value="UniProtKB-UniRule"/>
</dbReference>
<dbReference type="GO" id="GO:0055036">
    <property type="term" value="C:virion membrane"/>
    <property type="evidence" value="ECO:0007669"/>
    <property type="project" value="UniProtKB-SubCell"/>
</dbReference>
<dbReference type="GO" id="GO:0046789">
    <property type="term" value="F:host cell surface receptor binding"/>
    <property type="evidence" value="ECO:0007669"/>
    <property type="project" value="UniProtKB-UniRule"/>
</dbReference>
<dbReference type="GO" id="GO:0106331">
    <property type="term" value="F:sialate 4-O-acetylesterase activity"/>
    <property type="evidence" value="ECO:0007669"/>
    <property type="project" value="RHEA"/>
</dbReference>
<dbReference type="GO" id="GO:0106330">
    <property type="term" value="F:sialate 9-O-acetylesterase activity"/>
    <property type="evidence" value="ECO:0007669"/>
    <property type="project" value="RHEA"/>
</dbReference>
<dbReference type="GO" id="GO:0075509">
    <property type="term" value="P:endocytosis involved in viral entry into host cell"/>
    <property type="evidence" value="ECO:0007669"/>
    <property type="project" value="UniProtKB-KW"/>
</dbReference>
<dbReference type="GO" id="GO:0039654">
    <property type="term" value="P:fusion of virus membrane with host endosome membrane"/>
    <property type="evidence" value="ECO:0007669"/>
    <property type="project" value="UniProtKB-UniRule"/>
</dbReference>
<dbReference type="GO" id="GO:0019064">
    <property type="term" value="P:fusion of virus membrane with host plasma membrane"/>
    <property type="evidence" value="ECO:0007669"/>
    <property type="project" value="InterPro"/>
</dbReference>
<dbReference type="GO" id="GO:0046761">
    <property type="term" value="P:viral budding from plasma membrane"/>
    <property type="evidence" value="ECO:0007669"/>
    <property type="project" value="UniProtKB-UniRule"/>
</dbReference>
<dbReference type="GO" id="GO:0019062">
    <property type="term" value="P:virion attachment to host cell"/>
    <property type="evidence" value="ECO:0007669"/>
    <property type="project" value="UniProtKB-KW"/>
</dbReference>
<dbReference type="Gene3D" id="2.20.70.20">
    <property type="match status" value="2"/>
</dbReference>
<dbReference type="Gene3D" id="3.90.20.10">
    <property type="match status" value="1"/>
</dbReference>
<dbReference type="HAMAP" id="MF_04072">
    <property type="entry name" value="INFV_HEMA"/>
    <property type="match status" value="1"/>
</dbReference>
<dbReference type="InterPro" id="IPR008980">
    <property type="entry name" value="Capsid_hemagglutn"/>
</dbReference>
<dbReference type="InterPro" id="IPR007142">
    <property type="entry name" value="Hemagglutn-estrase_core"/>
</dbReference>
<dbReference type="InterPro" id="IPR003860">
    <property type="entry name" value="Hemagglutn-estrase_hemagglutn"/>
</dbReference>
<dbReference type="InterPro" id="IPR001364">
    <property type="entry name" value="Hemagglutn_influenz_A/B"/>
</dbReference>
<dbReference type="InterPro" id="IPR014831">
    <property type="entry name" value="Hemagglutn_stalk_influenz-C"/>
</dbReference>
<dbReference type="Pfam" id="PF03996">
    <property type="entry name" value="Hema_esterase"/>
    <property type="match status" value="1"/>
</dbReference>
<dbReference type="Pfam" id="PF02710">
    <property type="entry name" value="Hema_HEFG"/>
    <property type="match status" value="1"/>
</dbReference>
<dbReference type="Pfam" id="PF08720">
    <property type="entry name" value="Hema_stalk"/>
    <property type="match status" value="1"/>
</dbReference>
<dbReference type="SUPFAM" id="SSF58064">
    <property type="entry name" value="Influenza hemagglutinin (stalk)"/>
    <property type="match status" value="1"/>
</dbReference>
<dbReference type="SUPFAM" id="SSF52266">
    <property type="entry name" value="SGNH hydrolase"/>
    <property type="match status" value="1"/>
</dbReference>
<dbReference type="SUPFAM" id="SSF49818">
    <property type="entry name" value="Viral protein domain"/>
    <property type="match status" value="1"/>
</dbReference>